<sequence length="196" mass="22074">MRVKGTNVTRIRRKKMIKLAKGYRGQRHINFKVAKQQVWKSYLYAYRDRKNVKRDYRKLWIARINAASRKNGISYSQLMHGFKVAGIDLNRKMLAELAVSDFATFSKLAETAKKQVSAPTRKAATLDTDIKIERIEKGAAKPVVLEPGKSTKTQEVAVAEKPTTASTVAEIKAYLDSESIKYPSSAKKADLLALVK</sequence>
<comment type="function">
    <text evidence="1">Binds directly to 23S ribosomal RNA and is necessary for the in vitro assembly process of the 50S ribosomal subunit. It is not involved in the protein synthesizing functions of that subunit (By similarity).</text>
</comment>
<comment type="similarity">
    <text evidence="2">Belongs to the bacterial ribosomal protein bL20 family.</text>
</comment>
<proteinExistence type="inferred from homology"/>
<protein>
    <recommendedName>
        <fullName evidence="2">Large ribosomal subunit protein bL20</fullName>
    </recommendedName>
    <alternativeName>
        <fullName>50S ribosomal protein L20</fullName>
    </alternativeName>
</protein>
<accession>Q04EH1</accession>
<gene>
    <name type="primary">rplT</name>
    <name type="ordered locus">OEOE_1278</name>
</gene>
<evidence type="ECO:0000250" key="1"/>
<evidence type="ECO:0000305" key="2"/>
<feature type="chain" id="PRO_0000355481" description="Large ribosomal subunit protein bL20">
    <location>
        <begin position="1"/>
        <end position="196"/>
    </location>
</feature>
<keyword id="KW-1185">Reference proteome</keyword>
<keyword id="KW-0687">Ribonucleoprotein</keyword>
<keyword id="KW-0689">Ribosomal protein</keyword>
<keyword id="KW-0694">RNA-binding</keyword>
<keyword id="KW-0699">rRNA-binding</keyword>
<organism>
    <name type="scientific">Oenococcus oeni (strain ATCC BAA-331 / PSU-1)</name>
    <dbReference type="NCBI Taxonomy" id="203123"/>
    <lineage>
        <taxon>Bacteria</taxon>
        <taxon>Bacillati</taxon>
        <taxon>Bacillota</taxon>
        <taxon>Bacilli</taxon>
        <taxon>Lactobacillales</taxon>
        <taxon>Lactobacillaceae</taxon>
        <taxon>Oenococcus</taxon>
    </lineage>
</organism>
<dbReference type="EMBL" id="CP000411">
    <property type="protein sequence ID" value="ABJ57151.1"/>
    <property type="molecule type" value="Genomic_DNA"/>
</dbReference>
<dbReference type="SMR" id="Q04EH1"/>
<dbReference type="STRING" id="203123.OEOE_1278"/>
<dbReference type="KEGG" id="ooe:OEOE_1278"/>
<dbReference type="PATRIC" id="fig|203123.7.peg.1290"/>
<dbReference type="eggNOG" id="COG0292">
    <property type="taxonomic scope" value="Bacteria"/>
</dbReference>
<dbReference type="HOGENOM" id="CLU_082429_0_0_9"/>
<dbReference type="Proteomes" id="UP000000774">
    <property type="component" value="Chromosome"/>
</dbReference>
<dbReference type="GO" id="GO:1990904">
    <property type="term" value="C:ribonucleoprotein complex"/>
    <property type="evidence" value="ECO:0007669"/>
    <property type="project" value="UniProtKB-KW"/>
</dbReference>
<dbReference type="GO" id="GO:0005840">
    <property type="term" value="C:ribosome"/>
    <property type="evidence" value="ECO:0007669"/>
    <property type="project" value="UniProtKB-KW"/>
</dbReference>
<dbReference type="GO" id="GO:0019843">
    <property type="term" value="F:rRNA binding"/>
    <property type="evidence" value="ECO:0007669"/>
    <property type="project" value="UniProtKB-UniRule"/>
</dbReference>
<dbReference type="GO" id="GO:0003735">
    <property type="term" value="F:structural constituent of ribosome"/>
    <property type="evidence" value="ECO:0007669"/>
    <property type="project" value="InterPro"/>
</dbReference>
<dbReference type="GO" id="GO:0000027">
    <property type="term" value="P:ribosomal large subunit assembly"/>
    <property type="evidence" value="ECO:0007669"/>
    <property type="project" value="UniProtKB-UniRule"/>
</dbReference>
<dbReference type="GO" id="GO:0006412">
    <property type="term" value="P:translation"/>
    <property type="evidence" value="ECO:0007669"/>
    <property type="project" value="InterPro"/>
</dbReference>
<dbReference type="CDD" id="cd07026">
    <property type="entry name" value="Ribosomal_L20"/>
    <property type="match status" value="1"/>
</dbReference>
<dbReference type="FunFam" id="1.10.1900.20:FF:000001">
    <property type="entry name" value="50S ribosomal protein L20"/>
    <property type="match status" value="1"/>
</dbReference>
<dbReference type="Gene3D" id="6.10.160.10">
    <property type="match status" value="1"/>
</dbReference>
<dbReference type="Gene3D" id="1.10.1900.20">
    <property type="entry name" value="Ribosomal protein L20"/>
    <property type="match status" value="1"/>
</dbReference>
<dbReference type="Gene3D" id="1.10.720.30">
    <property type="entry name" value="SAP domain"/>
    <property type="match status" value="1"/>
</dbReference>
<dbReference type="HAMAP" id="MF_00382">
    <property type="entry name" value="Ribosomal_bL20"/>
    <property type="match status" value="1"/>
</dbReference>
<dbReference type="InterPro" id="IPR025856">
    <property type="entry name" value="HeH/LEM_domain"/>
</dbReference>
<dbReference type="InterPro" id="IPR005813">
    <property type="entry name" value="Ribosomal_bL20"/>
</dbReference>
<dbReference type="InterPro" id="IPR049946">
    <property type="entry name" value="RIBOSOMAL_L20_CS"/>
</dbReference>
<dbReference type="InterPro" id="IPR035566">
    <property type="entry name" value="Ribosomal_protein_bL20_C"/>
</dbReference>
<dbReference type="InterPro" id="IPR036361">
    <property type="entry name" value="SAP_dom_sf"/>
</dbReference>
<dbReference type="NCBIfam" id="TIGR01032">
    <property type="entry name" value="rplT_bact"/>
    <property type="match status" value="1"/>
</dbReference>
<dbReference type="PANTHER" id="PTHR10986">
    <property type="entry name" value="39S RIBOSOMAL PROTEIN L20"/>
    <property type="match status" value="1"/>
</dbReference>
<dbReference type="Pfam" id="PF12949">
    <property type="entry name" value="HeH"/>
    <property type="match status" value="1"/>
</dbReference>
<dbReference type="Pfam" id="PF00453">
    <property type="entry name" value="Ribosomal_L20"/>
    <property type="match status" value="1"/>
</dbReference>
<dbReference type="PRINTS" id="PR00062">
    <property type="entry name" value="RIBOSOMALL20"/>
</dbReference>
<dbReference type="SUPFAM" id="SSF74731">
    <property type="entry name" value="Ribosomal protein L20"/>
    <property type="match status" value="1"/>
</dbReference>
<dbReference type="PROSITE" id="PS00937">
    <property type="entry name" value="RIBOSOMAL_L20"/>
    <property type="match status" value="1"/>
</dbReference>
<reference key="1">
    <citation type="journal article" date="2006" name="Proc. Natl. Acad. Sci. U.S.A.">
        <title>Comparative genomics of the lactic acid bacteria.</title>
        <authorList>
            <person name="Makarova K.S."/>
            <person name="Slesarev A."/>
            <person name="Wolf Y.I."/>
            <person name="Sorokin A."/>
            <person name="Mirkin B."/>
            <person name="Koonin E.V."/>
            <person name="Pavlov A."/>
            <person name="Pavlova N."/>
            <person name="Karamychev V."/>
            <person name="Polouchine N."/>
            <person name="Shakhova V."/>
            <person name="Grigoriev I."/>
            <person name="Lou Y."/>
            <person name="Rohksar D."/>
            <person name="Lucas S."/>
            <person name="Huang K."/>
            <person name="Goodstein D.M."/>
            <person name="Hawkins T."/>
            <person name="Plengvidhya V."/>
            <person name="Welker D."/>
            <person name="Hughes J."/>
            <person name="Goh Y."/>
            <person name="Benson A."/>
            <person name="Baldwin K."/>
            <person name="Lee J.-H."/>
            <person name="Diaz-Muniz I."/>
            <person name="Dosti B."/>
            <person name="Smeianov V."/>
            <person name="Wechter W."/>
            <person name="Barabote R."/>
            <person name="Lorca G."/>
            <person name="Altermann E."/>
            <person name="Barrangou R."/>
            <person name="Ganesan B."/>
            <person name="Xie Y."/>
            <person name="Rawsthorne H."/>
            <person name="Tamir D."/>
            <person name="Parker C."/>
            <person name="Breidt F."/>
            <person name="Broadbent J.R."/>
            <person name="Hutkins R."/>
            <person name="O'Sullivan D."/>
            <person name="Steele J."/>
            <person name="Unlu G."/>
            <person name="Saier M.H. Jr."/>
            <person name="Klaenhammer T."/>
            <person name="Richardson P."/>
            <person name="Kozyavkin S."/>
            <person name="Weimer B.C."/>
            <person name="Mills D.A."/>
        </authorList>
    </citation>
    <scope>NUCLEOTIDE SEQUENCE [LARGE SCALE GENOMIC DNA]</scope>
    <source>
        <strain>ATCC BAA-331 / PSU-1</strain>
    </source>
</reference>
<name>RL20_OENOB</name>